<accession>D4AZ68</accession>
<sequence length="408" mass="44085">MVKYALLPLVAVSLVQAGGPEWHHSRTADFAVDPKVHKGCTSWINVVDASGKLTCDAFLDTINVAKRQFIFWNPQLNSDCSNIQSKASYCAFLPSHVSKQTRGQMDPPPKTKPLPPGLFNDWGNNHAQKRNDPPPKTKPLPPGLFNDWGNNGARKRDGLSPTGGLGDFHGPKEAPPPDWGHKGVVEGNHGNTMSTRSPIMGTGLPEQQSEPAFMPPHIPNLPNGMENKMVVHATTLTKKLRPTGSYVKRDANAPAPTPGSVGVAIVGCKQYHTVKAKDTCFNIAQQYPGLLFSDFLRLNPPPSNLDTVCSNLKANTRVCVKGDTKTNLVPTPSAAVGVHARDVQGWPSPTKPGTNPGCKSFELVKKGDSCEGVARKHHISVAQLKQWNPAVGPTCEKLEIGYYACVRV</sequence>
<organism>
    <name type="scientific">Arthroderma benhamiae (strain ATCC MYA-4681 / CBS 112371)</name>
    <name type="common">Trichophyton mentagrophytes</name>
    <dbReference type="NCBI Taxonomy" id="663331"/>
    <lineage>
        <taxon>Eukaryota</taxon>
        <taxon>Fungi</taxon>
        <taxon>Dikarya</taxon>
        <taxon>Ascomycota</taxon>
        <taxon>Pezizomycotina</taxon>
        <taxon>Eurotiomycetes</taxon>
        <taxon>Eurotiomycetidae</taxon>
        <taxon>Onygenales</taxon>
        <taxon>Arthrodermataceae</taxon>
        <taxon>Trichophyton</taxon>
    </lineage>
</organism>
<dbReference type="EMBL" id="ABSU01000020">
    <property type="protein sequence ID" value="EFE31588.1"/>
    <property type="molecule type" value="Genomic_DNA"/>
</dbReference>
<dbReference type="RefSeq" id="XP_003012228.1">
    <property type="nucleotide sequence ID" value="XM_003012182.1"/>
</dbReference>
<dbReference type="SMR" id="D4AZ68"/>
<dbReference type="STRING" id="663331.D4AZ68"/>
<dbReference type="GeneID" id="9519796"/>
<dbReference type="KEGG" id="abe:ARB_01488"/>
<dbReference type="eggNOG" id="ENOG502RSIH">
    <property type="taxonomic scope" value="Eukaryota"/>
</dbReference>
<dbReference type="HOGENOM" id="CLU_058843_0_0_1"/>
<dbReference type="OMA" id="PGTNPGC"/>
<dbReference type="Proteomes" id="UP000008866">
    <property type="component" value="Unassembled WGS sequence"/>
</dbReference>
<dbReference type="GO" id="GO:0005576">
    <property type="term" value="C:extracellular region"/>
    <property type="evidence" value="ECO:0007669"/>
    <property type="project" value="UniProtKB-SubCell"/>
</dbReference>
<dbReference type="GO" id="GO:0008061">
    <property type="term" value="F:chitin binding"/>
    <property type="evidence" value="ECO:0007669"/>
    <property type="project" value="UniProtKB-KW"/>
</dbReference>
<dbReference type="CDD" id="cd00118">
    <property type="entry name" value="LysM"/>
    <property type="match status" value="2"/>
</dbReference>
<dbReference type="Gene3D" id="3.10.350.10">
    <property type="entry name" value="LysM domain"/>
    <property type="match status" value="2"/>
</dbReference>
<dbReference type="InterPro" id="IPR052210">
    <property type="entry name" value="LysM1-like"/>
</dbReference>
<dbReference type="InterPro" id="IPR018392">
    <property type="entry name" value="LysM_dom"/>
</dbReference>
<dbReference type="InterPro" id="IPR036779">
    <property type="entry name" value="LysM_dom_sf"/>
</dbReference>
<dbReference type="PANTHER" id="PTHR34997">
    <property type="entry name" value="AM15"/>
    <property type="match status" value="1"/>
</dbReference>
<dbReference type="PANTHER" id="PTHR34997:SF1">
    <property type="entry name" value="PEPTIDOGLYCAN-BINDING LYSIN DOMAIN"/>
    <property type="match status" value="1"/>
</dbReference>
<dbReference type="Pfam" id="PF01476">
    <property type="entry name" value="LysM"/>
    <property type="match status" value="2"/>
</dbReference>
<dbReference type="SMART" id="SM00257">
    <property type="entry name" value="LysM"/>
    <property type="match status" value="2"/>
</dbReference>
<dbReference type="SUPFAM" id="SSF54106">
    <property type="entry name" value="LysM domain"/>
    <property type="match status" value="2"/>
</dbReference>
<dbReference type="PROSITE" id="PS51782">
    <property type="entry name" value="LYSM"/>
    <property type="match status" value="3"/>
</dbReference>
<comment type="function">
    <text evidence="5">Might have a role in sequestration of chitin oligosaccharides (breakdown products of fungal cell walls that are released during invasion and act as triggers of host immunity) to dampen host defense.</text>
</comment>
<comment type="subcellular location">
    <subcellularLocation>
        <location evidence="4">Secreted</location>
    </subcellularLocation>
</comment>
<comment type="domain">
    <text evidence="5">The LysM domains bind chitin and potentially related carbohydrates, and might be involved in damping host defense.</text>
</comment>
<reference key="1">
    <citation type="journal article" date="2011" name="Genome Biol.">
        <title>Comparative and functional genomics provide insights into the pathogenicity of dermatophytic fungi.</title>
        <authorList>
            <person name="Burmester A."/>
            <person name="Shelest E."/>
            <person name="Gloeckner G."/>
            <person name="Heddergott C."/>
            <person name="Schindler S."/>
            <person name="Staib P."/>
            <person name="Heidel A."/>
            <person name="Felder M."/>
            <person name="Petzold A."/>
            <person name="Szafranski K."/>
            <person name="Feuermann M."/>
            <person name="Pedruzzi I."/>
            <person name="Priebe S."/>
            <person name="Groth M."/>
            <person name="Winkler R."/>
            <person name="Li W."/>
            <person name="Kniemeyer O."/>
            <person name="Schroeckh V."/>
            <person name="Hertweck C."/>
            <person name="Hube B."/>
            <person name="White T.C."/>
            <person name="Platzer M."/>
            <person name="Guthke R."/>
            <person name="Heitman J."/>
            <person name="Woestemeyer J."/>
            <person name="Zipfel P.F."/>
            <person name="Monod M."/>
            <person name="Brakhage A.A."/>
        </authorList>
    </citation>
    <scope>NUCLEOTIDE SEQUENCE [LARGE SCALE GENOMIC DNA]</scope>
    <source>
        <strain>ATCC MYA-4681 / CBS 112371</strain>
    </source>
</reference>
<reference key="2">
    <citation type="journal article" date="2009" name="Trends Microbiol.">
        <title>Fungal LysM effectors: extinguishers of host immunity?</title>
        <authorList>
            <person name="de Jonge R."/>
            <person name="Thomma B.P."/>
        </authorList>
    </citation>
    <scope>DOMAIN</scope>
    <scope>FUNCTION PREDICTION</scope>
</reference>
<feature type="signal peptide" evidence="1">
    <location>
        <begin position="1"/>
        <end position="17"/>
    </location>
</feature>
<feature type="chain" id="PRO_5003054113" description="LysM domain-containing protein ARB_01488">
    <location>
        <begin position="18"/>
        <end position="408"/>
    </location>
</feature>
<feature type="domain" description="LysM 1" evidence="2">
    <location>
        <begin position="42"/>
        <end position="91"/>
    </location>
</feature>
<feature type="domain" description="LysM 2" evidence="2">
    <location>
        <begin position="270"/>
        <end position="320"/>
    </location>
</feature>
<feature type="domain" description="LysM 3" evidence="2">
    <location>
        <begin position="360"/>
        <end position="406"/>
    </location>
</feature>
<feature type="region of interest" description="Disordered" evidence="3">
    <location>
        <begin position="98"/>
        <end position="178"/>
    </location>
</feature>
<feature type="compositionally biased region" description="Pro residues" evidence="3">
    <location>
        <begin position="106"/>
        <end position="116"/>
    </location>
</feature>
<name>LYSM3_ARTBC</name>
<protein>
    <recommendedName>
        <fullName evidence="4">LysM domain-containing protein ARB_01488</fullName>
    </recommendedName>
</protein>
<gene>
    <name type="ORF">ARB_01488</name>
</gene>
<keyword id="KW-0147">Chitin-binding</keyword>
<keyword id="KW-1185">Reference proteome</keyword>
<keyword id="KW-0677">Repeat</keyword>
<keyword id="KW-0964">Secreted</keyword>
<keyword id="KW-0732">Signal</keyword>
<keyword id="KW-0843">Virulence</keyword>
<proteinExistence type="inferred from homology"/>
<evidence type="ECO:0000255" key="1"/>
<evidence type="ECO:0000255" key="2">
    <source>
        <dbReference type="PROSITE-ProRule" id="PRU01118"/>
    </source>
</evidence>
<evidence type="ECO:0000256" key="3">
    <source>
        <dbReference type="SAM" id="MobiDB-lite"/>
    </source>
</evidence>
<evidence type="ECO:0000305" key="4"/>
<evidence type="ECO:0000305" key="5">
    <source>
    </source>
</evidence>